<organism>
    <name type="scientific">Ehrlichia ruminantium (strain Gardel)</name>
    <dbReference type="NCBI Taxonomy" id="302409"/>
    <lineage>
        <taxon>Bacteria</taxon>
        <taxon>Pseudomonadati</taxon>
        <taxon>Pseudomonadota</taxon>
        <taxon>Alphaproteobacteria</taxon>
        <taxon>Rickettsiales</taxon>
        <taxon>Anaplasmataceae</taxon>
        <taxon>Ehrlichia</taxon>
    </lineage>
</organism>
<evidence type="ECO:0000255" key="1">
    <source>
        <dbReference type="HAMAP-Rule" id="MF_01595"/>
    </source>
</evidence>
<evidence type="ECO:0000256" key="2">
    <source>
        <dbReference type="SAM" id="MobiDB-lite"/>
    </source>
</evidence>
<accession>Q5FHK5</accession>
<sequence>MFNLIRKSTEWGGKTLVLESGKIARQANGAVVVTYGGTTVLSTVVAGKAKEPVDFLPLTVQFVAKSYAVGKIPGGFLKREGKPSDRETLISRLIDRSIRPLFPSGFYDEVSIVCNLLSYDTVTPPEVTALIGATAALAISGVPFNGMVVGARVGYLLSEDKYLLNASADEMLSSSLDLFLSGNKDSVLMVESEASELSESQMLAAISFGHQNCQEVIKLIEEFREESGILPFGFIPHDITSLVDDIASSYTESFSIAYSNIVKKERVLELEKLRDQVLSDMLAKYEQPNGNLQCQYSSQDIISALKSFERSLVRSKIIETSSRIDGRAFNGIRDIEIEIDVLPKTHGSALFTRGNTQALVVTALGTPQDEQIVDDLDGDRRENFLLHYNFPPYAVGESAALRAPGRREIGHGKLAWKAIRYVLPEKSDFPYTIRVVSEITESDGSSSMATVCGASLALMDTGVPIKAPVAGIAMGLIKEGEKFIILSDILGDEDHLGDMDFKVAGTSSGITALQMDMKISGISIEVIEKSLLQAKDGRMHILDKMNLVIQESRECIKNHAPRIESIFINKDKIRNVIGSGGKNIREICEKTGARVEIMQDGTVMIYAINNDAVEYAKNMIMDIVSEPEIGKVFDGTVIEIVKFGAFVSFLGGKRGLIHISEIKNEHINAVGSVISVNDKVKVLVIGIDREYVQLSMRRVDQETGEPIDGELYNIRKTNSDSDDSFLSSGSVNNRHGSEKKRRGSGRSRRSSGGSSYHRDDLHNNGFGNGNRSFNDNRNGNEVPRKPRFF</sequence>
<gene>
    <name evidence="1" type="primary">pnp</name>
    <name type="ordered locus">ERGA_CDS_03570</name>
</gene>
<protein>
    <recommendedName>
        <fullName evidence="1">Polyribonucleotide nucleotidyltransferase</fullName>
        <ecNumber evidence="1">2.7.7.8</ecNumber>
    </recommendedName>
    <alternativeName>
        <fullName evidence="1">Polynucleotide phosphorylase</fullName>
        <shortName evidence="1">PNPase</shortName>
    </alternativeName>
</protein>
<keyword id="KW-0963">Cytoplasm</keyword>
<keyword id="KW-0460">Magnesium</keyword>
<keyword id="KW-0479">Metal-binding</keyword>
<keyword id="KW-0548">Nucleotidyltransferase</keyword>
<keyword id="KW-0694">RNA-binding</keyword>
<keyword id="KW-0808">Transferase</keyword>
<dbReference type="EC" id="2.7.7.8" evidence="1"/>
<dbReference type="EMBL" id="CR925677">
    <property type="protein sequence ID" value="CAI27809.1"/>
    <property type="molecule type" value="Genomic_DNA"/>
</dbReference>
<dbReference type="RefSeq" id="WP_011255504.1">
    <property type="nucleotide sequence ID" value="NC_006831.1"/>
</dbReference>
<dbReference type="SMR" id="Q5FHK5"/>
<dbReference type="KEGG" id="erg:ERGA_CDS_03570"/>
<dbReference type="HOGENOM" id="CLU_004217_2_2_5"/>
<dbReference type="OrthoDB" id="9804305at2"/>
<dbReference type="Proteomes" id="UP000000533">
    <property type="component" value="Chromosome"/>
</dbReference>
<dbReference type="GO" id="GO:0005829">
    <property type="term" value="C:cytosol"/>
    <property type="evidence" value="ECO:0007669"/>
    <property type="project" value="TreeGrafter"/>
</dbReference>
<dbReference type="GO" id="GO:0000175">
    <property type="term" value="F:3'-5'-RNA exonuclease activity"/>
    <property type="evidence" value="ECO:0007669"/>
    <property type="project" value="TreeGrafter"/>
</dbReference>
<dbReference type="GO" id="GO:0000287">
    <property type="term" value="F:magnesium ion binding"/>
    <property type="evidence" value="ECO:0007669"/>
    <property type="project" value="UniProtKB-UniRule"/>
</dbReference>
<dbReference type="GO" id="GO:0004654">
    <property type="term" value="F:polyribonucleotide nucleotidyltransferase activity"/>
    <property type="evidence" value="ECO:0007669"/>
    <property type="project" value="UniProtKB-UniRule"/>
</dbReference>
<dbReference type="GO" id="GO:0003723">
    <property type="term" value="F:RNA binding"/>
    <property type="evidence" value="ECO:0007669"/>
    <property type="project" value="UniProtKB-UniRule"/>
</dbReference>
<dbReference type="GO" id="GO:0006402">
    <property type="term" value="P:mRNA catabolic process"/>
    <property type="evidence" value="ECO:0007669"/>
    <property type="project" value="UniProtKB-UniRule"/>
</dbReference>
<dbReference type="GO" id="GO:0006396">
    <property type="term" value="P:RNA processing"/>
    <property type="evidence" value="ECO:0007669"/>
    <property type="project" value="InterPro"/>
</dbReference>
<dbReference type="CDD" id="cd02393">
    <property type="entry name" value="KH-I_PNPase"/>
    <property type="match status" value="1"/>
</dbReference>
<dbReference type="CDD" id="cd11364">
    <property type="entry name" value="RNase_PH_PNPase_2"/>
    <property type="match status" value="1"/>
</dbReference>
<dbReference type="FunFam" id="3.30.1370.10:FF:000001">
    <property type="entry name" value="Polyribonucleotide nucleotidyltransferase"/>
    <property type="match status" value="1"/>
</dbReference>
<dbReference type="FunFam" id="3.30.230.70:FF:000001">
    <property type="entry name" value="Polyribonucleotide nucleotidyltransferase"/>
    <property type="match status" value="1"/>
</dbReference>
<dbReference type="FunFam" id="3.30.230.70:FF:000002">
    <property type="entry name" value="Polyribonucleotide nucleotidyltransferase"/>
    <property type="match status" value="1"/>
</dbReference>
<dbReference type="Gene3D" id="3.30.230.70">
    <property type="entry name" value="GHMP Kinase, N-terminal domain"/>
    <property type="match status" value="2"/>
</dbReference>
<dbReference type="Gene3D" id="3.30.1370.10">
    <property type="entry name" value="K Homology domain, type 1"/>
    <property type="match status" value="1"/>
</dbReference>
<dbReference type="Gene3D" id="2.40.50.140">
    <property type="entry name" value="Nucleic acid-binding proteins"/>
    <property type="match status" value="1"/>
</dbReference>
<dbReference type="HAMAP" id="MF_01595">
    <property type="entry name" value="PNPase"/>
    <property type="match status" value="1"/>
</dbReference>
<dbReference type="InterPro" id="IPR001247">
    <property type="entry name" value="ExoRNase_PH_dom1"/>
</dbReference>
<dbReference type="InterPro" id="IPR015847">
    <property type="entry name" value="ExoRNase_PH_dom2"/>
</dbReference>
<dbReference type="InterPro" id="IPR036345">
    <property type="entry name" value="ExoRNase_PH_dom2_sf"/>
</dbReference>
<dbReference type="InterPro" id="IPR004087">
    <property type="entry name" value="KH_dom"/>
</dbReference>
<dbReference type="InterPro" id="IPR004088">
    <property type="entry name" value="KH_dom_type_1"/>
</dbReference>
<dbReference type="InterPro" id="IPR036612">
    <property type="entry name" value="KH_dom_type_1_sf"/>
</dbReference>
<dbReference type="InterPro" id="IPR012340">
    <property type="entry name" value="NA-bd_OB-fold"/>
</dbReference>
<dbReference type="InterPro" id="IPR012162">
    <property type="entry name" value="PNPase"/>
</dbReference>
<dbReference type="InterPro" id="IPR027408">
    <property type="entry name" value="PNPase/RNase_PH_dom_sf"/>
</dbReference>
<dbReference type="InterPro" id="IPR015848">
    <property type="entry name" value="PNPase_PH_RNA-bd_bac/org-type"/>
</dbReference>
<dbReference type="InterPro" id="IPR020568">
    <property type="entry name" value="Ribosomal_Su5_D2-typ_SF"/>
</dbReference>
<dbReference type="InterPro" id="IPR003029">
    <property type="entry name" value="S1_domain"/>
</dbReference>
<dbReference type="NCBIfam" id="TIGR03591">
    <property type="entry name" value="polynuc_phos"/>
    <property type="match status" value="1"/>
</dbReference>
<dbReference type="NCBIfam" id="NF008805">
    <property type="entry name" value="PRK11824.1"/>
    <property type="match status" value="1"/>
</dbReference>
<dbReference type="PANTHER" id="PTHR11252">
    <property type="entry name" value="POLYRIBONUCLEOTIDE NUCLEOTIDYLTRANSFERASE"/>
    <property type="match status" value="1"/>
</dbReference>
<dbReference type="PANTHER" id="PTHR11252:SF0">
    <property type="entry name" value="POLYRIBONUCLEOTIDE NUCLEOTIDYLTRANSFERASE 1, MITOCHONDRIAL"/>
    <property type="match status" value="1"/>
</dbReference>
<dbReference type="Pfam" id="PF00013">
    <property type="entry name" value="KH_1"/>
    <property type="match status" value="1"/>
</dbReference>
<dbReference type="Pfam" id="PF03726">
    <property type="entry name" value="PNPase"/>
    <property type="match status" value="1"/>
</dbReference>
<dbReference type="Pfam" id="PF01138">
    <property type="entry name" value="RNase_PH"/>
    <property type="match status" value="2"/>
</dbReference>
<dbReference type="Pfam" id="PF03725">
    <property type="entry name" value="RNase_PH_C"/>
    <property type="match status" value="2"/>
</dbReference>
<dbReference type="Pfam" id="PF00575">
    <property type="entry name" value="S1"/>
    <property type="match status" value="1"/>
</dbReference>
<dbReference type="PIRSF" id="PIRSF005499">
    <property type="entry name" value="PNPase"/>
    <property type="match status" value="1"/>
</dbReference>
<dbReference type="SMART" id="SM00322">
    <property type="entry name" value="KH"/>
    <property type="match status" value="1"/>
</dbReference>
<dbReference type="SMART" id="SM00316">
    <property type="entry name" value="S1"/>
    <property type="match status" value="1"/>
</dbReference>
<dbReference type="SUPFAM" id="SSF54791">
    <property type="entry name" value="Eukaryotic type KH-domain (KH-domain type I)"/>
    <property type="match status" value="1"/>
</dbReference>
<dbReference type="SUPFAM" id="SSF50249">
    <property type="entry name" value="Nucleic acid-binding proteins"/>
    <property type="match status" value="1"/>
</dbReference>
<dbReference type="SUPFAM" id="SSF55666">
    <property type="entry name" value="Ribonuclease PH domain 2-like"/>
    <property type="match status" value="2"/>
</dbReference>
<dbReference type="SUPFAM" id="SSF54211">
    <property type="entry name" value="Ribosomal protein S5 domain 2-like"/>
    <property type="match status" value="2"/>
</dbReference>
<dbReference type="PROSITE" id="PS50084">
    <property type="entry name" value="KH_TYPE_1"/>
    <property type="match status" value="1"/>
</dbReference>
<dbReference type="PROSITE" id="PS50126">
    <property type="entry name" value="S1"/>
    <property type="match status" value="1"/>
</dbReference>
<feature type="chain" id="PRO_0000329632" description="Polyribonucleotide nucleotidyltransferase">
    <location>
        <begin position="1"/>
        <end position="789"/>
    </location>
</feature>
<feature type="domain" description="KH" evidence="1">
    <location>
        <begin position="561"/>
        <end position="620"/>
    </location>
</feature>
<feature type="domain" description="S1 motif" evidence="1">
    <location>
        <begin position="630"/>
        <end position="697"/>
    </location>
</feature>
<feature type="region of interest" description="Disordered" evidence="2">
    <location>
        <begin position="709"/>
        <end position="789"/>
    </location>
</feature>
<feature type="compositionally biased region" description="Basic residues" evidence="2">
    <location>
        <begin position="737"/>
        <end position="749"/>
    </location>
</feature>
<feature type="compositionally biased region" description="Low complexity" evidence="2">
    <location>
        <begin position="763"/>
        <end position="780"/>
    </location>
</feature>
<feature type="binding site" evidence="1">
    <location>
        <position position="494"/>
    </location>
    <ligand>
        <name>Mg(2+)</name>
        <dbReference type="ChEBI" id="CHEBI:18420"/>
    </ligand>
</feature>
<feature type="binding site" evidence="1">
    <location>
        <position position="500"/>
    </location>
    <ligand>
        <name>Mg(2+)</name>
        <dbReference type="ChEBI" id="CHEBI:18420"/>
    </ligand>
</feature>
<name>PNP_EHRRG</name>
<reference key="1">
    <citation type="journal article" date="2006" name="J. Bacteriol.">
        <title>Comparative genomic analysis of three strains of Ehrlichia ruminantium reveals an active process of genome size plasticity.</title>
        <authorList>
            <person name="Frutos R."/>
            <person name="Viari A."/>
            <person name="Ferraz C."/>
            <person name="Morgat A."/>
            <person name="Eychenie S."/>
            <person name="Kandassamy Y."/>
            <person name="Chantal I."/>
            <person name="Bensaid A."/>
            <person name="Coissac E."/>
            <person name="Vachiery N."/>
            <person name="Demaille J."/>
            <person name="Martinez D."/>
        </authorList>
    </citation>
    <scope>NUCLEOTIDE SEQUENCE [LARGE SCALE GENOMIC DNA]</scope>
    <source>
        <strain>Gardel</strain>
    </source>
</reference>
<proteinExistence type="inferred from homology"/>
<comment type="function">
    <text evidence="1">Involved in mRNA degradation. Catalyzes the phosphorolysis of single-stranded polyribonucleotides processively in the 3'- to 5'-direction.</text>
</comment>
<comment type="catalytic activity">
    <reaction evidence="1">
        <text>RNA(n+1) + phosphate = RNA(n) + a ribonucleoside 5'-diphosphate</text>
        <dbReference type="Rhea" id="RHEA:22096"/>
        <dbReference type="Rhea" id="RHEA-COMP:14527"/>
        <dbReference type="Rhea" id="RHEA-COMP:17342"/>
        <dbReference type="ChEBI" id="CHEBI:43474"/>
        <dbReference type="ChEBI" id="CHEBI:57930"/>
        <dbReference type="ChEBI" id="CHEBI:140395"/>
        <dbReference type="EC" id="2.7.7.8"/>
    </reaction>
</comment>
<comment type="cofactor">
    <cofactor evidence="1">
        <name>Mg(2+)</name>
        <dbReference type="ChEBI" id="CHEBI:18420"/>
    </cofactor>
</comment>
<comment type="subcellular location">
    <subcellularLocation>
        <location evidence="1">Cytoplasm</location>
    </subcellularLocation>
</comment>
<comment type="similarity">
    <text evidence="1">Belongs to the polyribonucleotide nucleotidyltransferase family.</text>
</comment>